<comment type="function">
    <text evidence="1">Implicated in immunoproteasome assembly and required for efficient antigen processing. The PA28 activator complex enhances the generation of class I binding peptides by altering the cleavage pattern of the proteasome (By similarity).</text>
</comment>
<comment type="subunit">
    <text evidence="1">Heterodimer of PSME1 and PSME2, which forms a hexameric ring. PSME1 can form homoheptamers (By similarity).</text>
</comment>
<comment type="induction">
    <text evidence="1">By interferon gamma.</text>
</comment>
<comment type="similarity">
    <text evidence="3">Belongs to the PA28 family.</text>
</comment>
<dbReference type="EMBL" id="AB060910">
    <property type="protein sequence ID" value="BAB46905.1"/>
    <property type="molecule type" value="mRNA"/>
</dbReference>
<dbReference type="RefSeq" id="NP_001271536.1">
    <property type="nucleotide sequence ID" value="NM_001284607.1"/>
</dbReference>
<dbReference type="SMR" id="P58238"/>
<dbReference type="STRING" id="9541.ENSMFAP00000022652"/>
<dbReference type="eggNOG" id="KOG4470">
    <property type="taxonomic scope" value="Eukaryota"/>
</dbReference>
<dbReference type="Proteomes" id="UP000233100">
    <property type="component" value="Unplaced"/>
</dbReference>
<dbReference type="GO" id="GO:0005737">
    <property type="term" value="C:cytoplasm"/>
    <property type="evidence" value="ECO:0007669"/>
    <property type="project" value="TreeGrafter"/>
</dbReference>
<dbReference type="GO" id="GO:0005654">
    <property type="term" value="C:nucleoplasm"/>
    <property type="evidence" value="ECO:0007669"/>
    <property type="project" value="TreeGrafter"/>
</dbReference>
<dbReference type="GO" id="GO:0008537">
    <property type="term" value="C:proteasome activator complex"/>
    <property type="evidence" value="ECO:0007669"/>
    <property type="project" value="InterPro"/>
</dbReference>
<dbReference type="GO" id="GO:0061133">
    <property type="term" value="F:endopeptidase activator activity"/>
    <property type="evidence" value="ECO:0007669"/>
    <property type="project" value="TreeGrafter"/>
</dbReference>
<dbReference type="GO" id="GO:2000045">
    <property type="term" value="P:regulation of G1/S transition of mitotic cell cycle"/>
    <property type="evidence" value="ECO:0007669"/>
    <property type="project" value="TreeGrafter"/>
</dbReference>
<dbReference type="GO" id="GO:0061136">
    <property type="term" value="P:regulation of proteasomal protein catabolic process"/>
    <property type="evidence" value="ECO:0007669"/>
    <property type="project" value="TreeGrafter"/>
</dbReference>
<dbReference type="FunFam" id="1.20.120.180:FF:000002">
    <property type="entry name" value="Proteasome activator complex subunit 1"/>
    <property type="match status" value="1"/>
</dbReference>
<dbReference type="FunFam" id="1.20.5.120:FF:000001">
    <property type="entry name" value="Proteasome activator complex subunit 3"/>
    <property type="match status" value="1"/>
</dbReference>
<dbReference type="Gene3D" id="1.20.120.180">
    <property type="entry name" value="Proteasome activator pa28, C-terminal domain"/>
    <property type="match status" value="1"/>
</dbReference>
<dbReference type="Gene3D" id="1.20.5.120">
    <property type="entry name" value="Proteasome activator pa28, N-terminal domain"/>
    <property type="match status" value="1"/>
</dbReference>
<dbReference type="InterPro" id="IPR003186">
    <property type="entry name" value="PA28_C"/>
</dbReference>
<dbReference type="InterPro" id="IPR036997">
    <property type="entry name" value="PA28_C_sf"/>
</dbReference>
<dbReference type="InterPro" id="IPR036996">
    <property type="entry name" value="PA28_N_sf"/>
</dbReference>
<dbReference type="InterPro" id="IPR009077">
    <property type="entry name" value="Proteasome_activ_PA28"/>
</dbReference>
<dbReference type="InterPro" id="IPR003185">
    <property type="entry name" value="Proteasome_activ_PA28_N"/>
</dbReference>
<dbReference type="InterPro" id="IPR036252">
    <property type="entry name" value="Proteasome_activ_sf"/>
</dbReference>
<dbReference type="PANTHER" id="PTHR10660:SF5">
    <property type="entry name" value="PROTEASOME ACTIVATOR COMPLEX SUBUNIT 1"/>
    <property type="match status" value="1"/>
</dbReference>
<dbReference type="PANTHER" id="PTHR10660">
    <property type="entry name" value="PROTEASOME REGULATOR PA28"/>
    <property type="match status" value="1"/>
</dbReference>
<dbReference type="Pfam" id="PF02252">
    <property type="entry name" value="PA28_C"/>
    <property type="match status" value="1"/>
</dbReference>
<dbReference type="Pfam" id="PF02251">
    <property type="entry name" value="PA28_N"/>
    <property type="match status" value="1"/>
</dbReference>
<dbReference type="SUPFAM" id="SSF47216">
    <property type="entry name" value="Proteasome activator"/>
    <property type="match status" value="1"/>
</dbReference>
<accession>P58238</accession>
<sequence length="249" mass="28635">MATLRVQPEAQAKVDVFREDLCTKTENLLGSYFPKKISELDAFLKEPALNEANLSNLKAPLDIPVPDPVKEKEKGERKKQQEKEDKDEKKKGEDEDKGPPCGPVNCNEKILVLLQRLKPEIKDVIEQLNLVTTWLQLQIPRIEDGNNFGVAVQEKVFELMTSLHTKLEGFHTQISKYFSERGDAVTKAAKQPHVGDYRQLVHELDEAEYRDIRLMVMEIRNAYAVLYDIILKNFEKLKKPRGETKGMIY</sequence>
<gene>
    <name type="primary">PSME1</name>
    <name type="ORF">QtrA-14089</name>
</gene>
<keyword id="KW-0647">Proteasome</keyword>
<keyword id="KW-1185">Reference proteome</keyword>
<organism>
    <name type="scientific">Macaca fascicularis</name>
    <name type="common">Crab-eating macaque</name>
    <name type="synonym">Cynomolgus monkey</name>
    <dbReference type="NCBI Taxonomy" id="9541"/>
    <lineage>
        <taxon>Eukaryota</taxon>
        <taxon>Metazoa</taxon>
        <taxon>Chordata</taxon>
        <taxon>Craniata</taxon>
        <taxon>Vertebrata</taxon>
        <taxon>Euteleostomi</taxon>
        <taxon>Mammalia</taxon>
        <taxon>Eutheria</taxon>
        <taxon>Euarchontoglires</taxon>
        <taxon>Primates</taxon>
        <taxon>Haplorrhini</taxon>
        <taxon>Catarrhini</taxon>
        <taxon>Cercopithecidae</taxon>
        <taxon>Cercopithecinae</taxon>
        <taxon>Macaca</taxon>
    </lineage>
</organism>
<reference key="1">
    <citation type="submission" date="2001-04" db="EMBL/GenBank/DDBJ databases">
        <title>Isolation of full-length cDNA clones from macaque brain cDNA libraries.</title>
        <authorList>
            <person name="Osada N."/>
            <person name="Hida M."/>
            <person name="Kusuda J."/>
            <person name="Tanuma R."/>
            <person name="Iseki K."/>
            <person name="Hirai M."/>
            <person name="Terao K."/>
            <person name="Suzuki Y."/>
            <person name="Sugano S."/>
            <person name="Hashimoto K."/>
        </authorList>
    </citation>
    <scope>NUCLEOTIDE SEQUENCE [LARGE SCALE MRNA]</scope>
    <source>
        <tissue>Temporal cortex</tissue>
    </source>
</reference>
<proteinExistence type="evidence at transcript level"/>
<evidence type="ECO:0000250" key="1"/>
<evidence type="ECO:0000256" key="2">
    <source>
        <dbReference type="SAM" id="MobiDB-lite"/>
    </source>
</evidence>
<evidence type="ECO:0000305" key="3"/>
<protein>
    <recommendedName>
        <fullName>Proteasome activator complex subunit 1</fullName>
    </recommendedName>
    <alternativeName>
        <fullName>11S regulator complex subunit alpha</fullName>
        <shortName>REG-alpha</shortName>
    </alternativeName>
    <alternativeName>
        <fullName>Activator of multicatalytic protease subunit 1</fullName>
    </alternativeName>
    <alternativeName>
        <fullName>Proteasome activator 28 subunit alpha</fullName>
        <shortName>PA28a</shortName>
        <shortName>PA28alpha</shortName>
    </alternativeName>
</protein>
<name>PSME1_MACFA</name>
<feature type="chain" id="PRO_0000161780" description="Proteasome activator complex subunit 1">
    <location>
        <begin position="1"/>
        <end position="249"/>
    </location>
</feature>
<feature type="region of interest" description="Disordered" evidence="2">
    <location>
        <begin position="60"/>
        <end position="101"/>
    </location>
</feature>
<feature type="compositionally biased region" description="Basic and acidic residues" evidence="2">
    <location>
        <begin position="68"/>
        <end position="98"/>
    </location>
</feature>